<name>TSAD_PARXL</name>
<evidence type="ECO:0000255" key="1">
    <source>
        <dbReference type="HAMAP-Rule" id="MF_01445"/>
    </source>
</evidence>
<gene>
    <name evidence="1" type="primary">tsaD</name>
    <name type="synonym">gcp</name>
    <name type="ordered locus">Bxeno_B0202</name>
    <name type="ORF">Bxe_B2825</name>
</gene>
<sequence>MLVLGIESSCDETGLALYDTERGLLAHALHSQIAMHREYGGVVPELASRDHIRRALPLLEEVMERAGTAAGDIDAIAYTQGPGLAGALLVGASVANALAMAWDKPTIGIHHLEGHLLSPLLVDEPPPFPFVALLVSGGHTQLMRVTDVGVYETLGETLDDAAGEAFDKTAKLLGLGYPGGPEVSRMAEFGTPGAVVLPRPMLHSGDLDFSFSGLKTAVLTHAKKLGGANICEQAKADLARGFVDAAVEVLAAKSLAALKKTGLNRLVVAGGVGANRQLREALSAAAKKRNFYVHYPDLSLCTDNGAMIALAGALRLQRWPDQSGKDYAFTVKPRWDLTSLAR</sequence>
<proteinExistence type="inferred from homology"/>
<reference key="1">
    <citation type="journal article" date="2006" name="Proc. Natl. Acad. Sci. U.S.A.">
        <title>Burkholderia xenovorans LB400 harbors a multi-replicon, 9.73-Mbp genome shaped for versatility.</title>
        <authorList>
            <person name="Chain P.S.G."/>
            <person name="Denef V.J."/>
            <person name="Konstantinidis K.T."/>
            <person name="Vergez L.M."/>
            <person name="Agullo L."/>
            <person name="Reyes V.L."/>
            <person name="Hauser L."/>
            <person name="Cordova M."/>
            <person name="Gomez L."/>
            <person name="Gonzalez M."/>
            <person name="Land M."/>
            <person name="Lao V."/>
            <person name="Larimer F."/>
            <person name="LiPuma J.J."/>
            <person name="Mahenthiralingam E."/>
            <person name="Malfatti S.A."/>
            <person name="Marx C.J."/>
            <person name="Parnell J.J."/>
            <person name="Ramette A."/>
            <person name="Richardson P."/>
            <person name="Seeger M."/>
            <person name="Smith D."/>
            <person name="Spilker T."/>
            <person name="Sul W.J."/>
            <person name="Tsoi T.V."/>
            <person name="Ulrich L.E."/>
            <person name="Zhulin I.B."/>
            <person name="Tiedje J.M."/>
        </authorList>
    </citation>
    <scope>NUCLEOTIDE SEQUENCE [LARGE SCALE GENOMIC DNA]</scope>
    <source>
        <strain>LB400</strain>
    </source>
</reference>
<keyword id="KW-0012">Acyltransferase</keyword>
<keyword id="KW-0963">Cytoplasm</keyword>
<keyword id="KW-0408">Iron</keyword>
<keyword id="KW-0479">Metal-binding</keyword>
<keyword id="KW-1185">Reference proteome</keyword>
<keyword id="KW-0808">Transferase</keyword>
<keyword id="KW-0819">tRNA processing</keyword>
<feature type="chain" id="PRO_0000303308" description="tRNA N6-adenosine threonylcarbamoyltransferase">
    <location>
        <begin position="1"/>
        <end position="342"/>
    </location>
</feature>
<feature type="binding site" evidence="1">
    <location>
        <position position="111"/>
    </location>
    <ligand>
        <name>Fe cation</name>
        <dbReference type="ChEBI" id="CHEBI:24875"/>
    </ligand>
</feature>
<feature type="binding site" evidence="1">
    <location>
        <position position="115"/>
    </location>
    <ligand>
        <name>Fe cation</name>
        <dbReference type="ChEBI" id="CHEBI:24875"/>
    </ligand>
</feature>
<feature type="binding site" evidence="1">
    <location>
        <begin position="134"/>
        <end position="138"/>
    </location>
    <ligand>
        <name>substrate</name>
    </ligand>
</feature>
<feature type="binding site" evidence="1">
    <location>
        <position position="167"/>
    </location>
    <ligand>
        <name>substrate</name>
    </ligand>
</feature>
<feature type="binding site" evidence="1">
    <location>
        <position position="180"/>
    </location>
    <ligand>
        <name>substrate</name>
    </ligand>
</feature>
<feature type="binding site" evidence="1">
    <location>
        <position position="275"/>
    </location>
    <ligand>
        <name>substrate</name>
    </ligand>
</feature>
<feature type="binding site" evidence="1">
    <location>
        <position position="303"/>
    </location>
    <ligand>
        <name>Fe cation</name>
        <dbReference type="ChEBI" id="CHEBI:24875"/>
    </ligand>
</feature>
<accession>Q13RW9</accession>
<protein>
    <recommendedName>
        <fullName evidence="1">tRNA N6-adenosine threonylcarbamoyltransferase</fullName>
        <ecNumber evidence="1">2.3.1.234</ecNumber>
    </recommendedName>
    <alternativeName>
        <fullName evidence="1">N6-L-threonylcarbamoyladenine synthase</fullName>
        <shortName evidence="1">t(6)A synthase</shortName>
    </alternativeName>
    <alternativeName>
        <fullName evidence="1">t(6)A37 threonylcarbamoyladenosine biosynthesis protein TsaD</fullName>
    </alternativeName>
    <alternativeName>
        <fullName evidence="1">tRNA threonylcarbamoyladenosine biosynthesis protein TsaD</fullName>
    </alternativeName>
</protein>
<organism>
    <name type="scientific">Paraburkholderia xenovorans (strain LB400)</name>
    <dbReference type="NCBI Taxonomy" id="266265"/>
    <lineage>
        <taxon>Bacteria</taxon>
        <taxon>Pseudomonadati</taxon>
        <taxon>Pseudomonadota</taxon>
        <taxon>Betaproteobacteria</taxon>
        <taxon>Burkholderiales</taxon>
        <taxon>Burkholderiaceae</taxon>
        <taxon>Paraburkholderia</taxon>
    </lineage>
</organism>
<dbReference type="EC" id="2.3.1.234" evidence="1"/>
<dbReference type="EMBL" id="CP000271">
    <property type="protein sequence ID" value="ABE33170.1"/>
    <property type="molecule type" value="Genomic_DNA"/>
</dbReference>
<dbReference type="RefSeq" id="WP_011490546.1">
    <property type="nucleotide sequence ID" value="NC_007952.1"/>
</dbReference>
<dbReference type="SMR" id="Q13RW9"/>
<dbReference type="STRING" id="266265.Bxe_B2825"/>
<dbReference type="KEGG" id="bxb:DR64_5154"/>
<dbReference type="KEGG" id="bxe:Bxe_B2825"/>
<dbReference type="PATRIC" id="fig|266265.5.peg.4868"/>
<dbReference type="eggNOG" id="COG0533">
    <property type="taxonomic scope" value="Bacteria"/>
</dbReference>
<dbReference type="OrthoDB" id="9806197at2"/>
<dbReference type="Proteomes" id="UP000001817">
    <property type="component" value="Chromosome 2"/>
</dbReference>
<dbReference type="GO" id="GO:0005737">
    <property type="term" value="C:cytoplasm"/>
    <property type="evidence" value="ECO:0007669"/>
    <property type="project" value="UniProtKB-SubCell"/>
</dbReference>
<dbReference type="GO" id="GO:0005506">
    <property type="term" value="F:iron ion binding"/>
    <property type="evidence" value="ECO:0007669"/>
    <property type="project" value="UniProtKB-UniRule"/>
</dbReference>
<dbReference type="GO" id="GO:0061711">
    <property type="term" value="F:N(6)-L-threonylcarbamoyladenine synthase activity"/>
    <property type="evidence" value="ECO:0007669"/>
    <property type="project" value="UniProtKB-EC"/>
</dbReference>
<dbReference type="GO" id="GO:0002949">
    <property type="term" value="P:tRNA threonylcarbamoyladenosine modification"/>
    <property type="evidence" value="ECO:0007669"/>
    <property type="project" value="UniProtKB-UniRule"/>
</dbReference>
<dbReference type="CDD" id="cd24133">
    <property type="entry name" value="ASKHA_NBD_TsaD_bac"/>
    <property type="match status" value="1"/>
</dbReference>
<dbReference type="FunFam" id="3.30.420.40:FF:000012">
    <property type="entry name" value="tRNA N6-adenosine threonylcarbamoyltransferase"/>
    <property type="match status" value="1"/>
</dbReference>
<dbReference type="FunFam" id="3.30.420.40:FF:000040">
    <property type="entry name" value="tRNA N6-adenosine threonylcarbamoyltransferase"/>
    <property type="match status" value="1"/>
</dbReference>
<dbReference type="Gene3D" id="3.30.420.40">
    <property type="match status" value="2"/>
</dbReference>
<dbReference type="HAMAP" id="MF_01445">
    <property type="entry name" value="TsaD"/>
    <property type="match status" value="1"/>
</dbReference>
<dbReference type="InterPro" id="IPR043129">
    <property type="entry name" value="ATPase_NBD"/>
</dbReference>
<dbReference type="InterPro" id="IPR000905">
    <property type="entry name" value="Gcp-like_dom"/>
</dbReference>
<dbReference type="InterPro" id="IPR017861">
    <property type="entry name" value="KAE1/TsaD"/>
</dbReference>
<dbReference type="InterPro" id="IPR022450">
    <property type="entry name" value="TsaD"/>
</dbReference>
<dbReference type="NCBIfam" id="TIGR00329">
    <property type="entry name" value="gcp_kae1"/>
    <property type="match status" value="1"/>
</dbReference>
<dbReference type="NCBIfam" id="TIGR03723">
    <property type="entry name" value="T6A_TsaD_YgjD"/>
    <property type="match status" value="1"/>
</dbReference>
<dbReference type="PANTHER" id="PTHR11735">
    <property type="entry name" value="TRNA N6-ADENOSINE THREONYLCARBAMOYLTRANSFERASE"/>
    <property type="match status" value="1"/>
</dbReference>
<dbReference type="PANTHER" id="PTHR11735:SF6">
    <property type="entry name" value="TRNA N6-ADENOSINE THREONYLCARBAMOYLTRANSFERASE, MITOCHONDRIAL"/>
    <property type="match status" value="1"/>
</dbReference>
<dbReference type="Pfam" id="PF00814">
    <property type="entry name" value="TsaD"/>
    <property type="match status" value="1"/>
</dbReference>
<dbReference type="PRINTS" id="PR00789">
    <property type="entry name" value="OSIALOPTASE"/>
</dbReference>
<dbReference type="SUPFAM" id="SSF53067">
    <property type="entry name" value="Actin-like ATPase domain"/>
    <property type="match status" value="2"/>
</dbReference>
<comment type="function">
    <text evidence="1">Required for the formation of a threonylcarbamoyl group on adenosine at position 37 (t(6)A37) in tRNAs that read codons beginning with adenine. Is involved in the transfer of the threonylcarbamoyl moiety of threonylcarbamoyl-AMP (TC-AMP) to the N6 group of A37, together with TsaE and TsaB. TsaD likely plays a direct catalytic role in this reaction.</text>
</comment>
<comment type="catalytic activity">
    <reaction evidence="1">
        <text>L-threonylcarbamoyladenylate + adenosine(37) in tRNA = N(6)-L-threonylcarbamoyladenosine(37) in tRNA + AMP + H(+)</text>
        <dbReference type="Rhea" id="RHEA:37059"/>
        <dbReference type="Rhea" id="RHEA-COMP:10162"/>
        <dbReference type="Rhea" id="RHEA-COMP:10163"/>
        <dbReference type="ChEBI" id="CHEBI:15378"/>
        <dbReference type="ChEBI" id="CHEBI:73682"/>
        <dbReference type="ChEBI" id="CHEBI:74411"/>
        <dbReference type="ChEBI" id="CHEBI:74418"/>
        <dbReference type="ChEBI" id="CHEBI:456215"/>
        <dbReference type="EC" id="2.3.1.234"/>
    </reaction>
</comment>
<comment type="cofactor">
    <cofactor evidence="1">
        <name>Fe(2+)</name>
        <dbReference type="ChEBI" id="CHEBI:29033"/>
    </cofactor>
    <text evidence="1">Binds 1 Fe(2+) ion per subunit.</text>
</comment>
<comment type="subcellular location">
    <subcellularLocation>
        <location evidence="1">Cytoplasm</location>
    </subcellularLocation>
</comment>
<comment type="similarity">
    <text evidence="1">Belongs to the KAE1 / TsaD family.</text>
</comment>